<sequence>MYTGRFAPSPTGLLHIGSLLTAVASYADARSNGGKWLVRMEDLDPPREMPGAASHILHTLEAFGFKWDGEVTYQSRRYALYEETLYRLKTAGLVYPCHCNRKDWQAGARRGTDGFVYNGRCRHPGQRPALQGKQPSWRIRVPDRDIGFSDGIVGSYAQNLARDIGDFVLFRADGYWAYQLAVVADDAEQGVTHIVRGQDLLVSTPRQIYLQQCLGVPTPQYAHLPLLTNAQGQKWSKQTLAPALDLNRREQLLRQVFRYLKLPEAPETDRPAELLDWAVAHWDMDKVPKHAITAP</sequence>
<accession>Q5F6E8</accession>
<feature type="chain" id="PRO_0000208306" description="Glutamyl-Q tRNA(Asp) synthetase">
    <location>
        <begin position="1"/>
        <end position="295"/>
    </location>
</feature>
<feature type="short sequence motif" description="'HIGH' region">
    <location>
        <begin position="8"/>
        <end position="18"/>
    </location>
</feature>
<feature type="short sequence motif" description="'KMSKS' region">
    <location>
        <begin position="234"/>
        <end position="238"/>
    </location>
</feature>
<feature type="binding site" evidence="1">
    <location>
        <begin position="5"/>
        <end position="9"/>
    </location>
    <ligand>
        <name>L-glutamate</name>
        <dbReference type="ChEBI" id="CHEBI:29985"/>
    </ligand>
</feature>
<feature type="binding site" evidence="1">
    <location>
        <position position="41"/>
    </location>
    <ligand>
        <name>L-glutamate</name>
        <dbReference type="ChEBI" id="CHEBI:29985"/>
    </ligand>
</feature>
<feature type="binding site" evidence="1">
    <location>
        <position position="97"/>
    </location>
    <ligand>
        <name>Zn(2+)</name>
        <dbReference type="ChEBI" id="CHEBI:29105"/>
    </ligand>
</feature>
<feature type="binding site" evidence="1">
    <location>
        <position position="99"/>
    </location>
    <ligand>
        <name>Zn(2+)</name>
        <dbReference type="ChEBI" id="CHEBI:29105"/>
    </ligand>
</feature>
<feature type="binding site" evidence="1">
    <location>
        <position position="117"/>
    </location>
    <ligand>
        <name>Zn(2+)</name>
        <dbReference type="ChEBI" id="CHEBI:29105"/>
    </ligand>
</feature>
<feature type="binding site" evidence="1">
    <location>
        <position position="121"/>
    </location>
    <ligand>
        <name>Zn(2+)</name>
        <dbReference type="ChEBI" id="CHEBI:29105"/>
    </ligand>
</feature>
<feature type="binding site" evidence="1">
    <location>
        <position position="178"/>
    </location>
    <ligand>
        <name>L-glutamate</name>
        <dbReference type="ChEBI" id="CHEBI:29985"/>
    </ligand>
</feature>
<feature type="binding site" evidence="1">
    <location>
        <position position="196"/>
    </location>
    <ligand>
        <name>L-glutamate</name>
        <dbReference type="ChEBI" id="CHEBI:29985"/>
    </ligand>
</feature>
<feature type="binding site" evidence="1">
    <location>
        <position position="237"/>
    </location>
    <ligand>
        <name>ATP</name>
        <dbReference type="ChEBI" id="CHEBI:30616"/>
    </ligand>
</feature>
<protein>
    <recommendedName>
        <fullName evidence="1">Glutamyl-Q tRNA(Asp) synthetase</fullName>
        <shortName evidence="1">Glu-Q-RSs</shortName>
        <ecNumber evidence="1">6.1.1.-</ecNumber>
    </recommendedName>
</protein>
<keyword id="KW-0030">Aminoacyl-tRNA synthetase</keyword>
<keyword id="KW-0067">ATP-binding</keyword>
<keyword id="KW-0436">Ligase</keyword>
<keyword id="KW-0479">Metal-binding</keyword>
<keyword id="KW-0547">Nucleotide-binding</keyword>
<keyword id="KW-1185">Reference proteome</keyword>
<keyword id="KW-0862">Zinc</keyword>
<evidence type="ECO:0000255" key="1">
    <source>
        <dbReference type="HAMAP-Rule" id="MF_01428"/>
    </source>
</evidence>
<organism>
    <name type="scientific">Neisseria gonorrhoeae (strain ATCC 700825 / FA 1090)</name>
    <dbReference type="NCBI Taxonomy" id="242231"/>
    <lineage>
        <taxon>Bacteria</taxon>
        <taxon>Pseudomonadati</taxon>
        <taxon>Pseudomonadota</taxon>
        <taxon>Betaproteobacteria</taxon>
        <taxon>Neisseriales</taxon>
        <taxon>Neisseriaceae</taxon>
        <taxon>Neisseria</taxon>
    </lineage>
</organism>
<reference key="1">
    <citation type="submission" date="2003-03" db="EMBL/GenBank/DDBJ databases">
        <title>The complete genome sequence of Neisseria gonorrhoeae.</title>
        <authorList>
            <person name="Lewis L.A."/>
            <person name="Gillaspy A.F."/>
            <person name="McLaughlin R.E."/>
            <person name="Gipson M."/>
            <person name="Ducey T.F."/>
            <person name="Ownbey T."/>
            <person name="Hartman K."/>
            <person name="Nydick C."/>
            <person name="Carson M.B."/>
            <person name="Vaughn J."/>
            <person name="Thomson C."/>
            <person name="Song L."/>
            <person name="Lin S."/>
            <person name="Yuan X."/>
            <person name="Najar F."/>
            <person name="Zhan M."/>
            <person name="Ren Q."/>
            <person name="Zhu H."/>
            <person name="Qi S."/>
            <person name="Kenton S.M."/>
            <person name="Lai H."/>
            <person name="White J.D."/>
            <person name="Clifton S."/>
            <person name="Roe B.A."/>
            <person name="Dyer D.W."/>
        </authorList>
    </citation>
    <scope>NUCLEOTIDE SEQUENCE [LARGE SCALE GENOMIC DNA]</scope>
    <source>
        <strain>ATCC 700825 / FA 1090</strain>
    </source>
</reference>
<comment type="function">
    <text evidence="1">Catalyzes the tRNA-independent activation of glutamate in presence of ATP and the subsequent transfer of glutamate onto a tRNA(Asp). Glutamate is transferred on the 2-amino-5-(4,5-dihydroxy-2-cyclopenten-1-yl) moiety of the queuosine in the wobble position of the QUC anticodon.</text>
</comment>
<comment type="cofactor">
    <cofactor evidence="1">
        <name>Zn(2+)</name>
        <dbReference type="ChEBI" id="CHEBI:29105"/>
    </cofactor>
    <text evidence="1">Binds 1 zinc ion per subunit.</text>
</comment>
<comment type="similarity">
    <text evidence="1">Belongs to the class-I aminoacyl-tRNA synthetase family. GluQ subfamily.</text>
</comment>
<proteinExistence type="inferred from homology"/>
<dbReference type="EC" id="6.1.1.-" evidence="1"/>
<dbReference type="EMBL" id="AE004969">
    <property type="protein sequence ID" value="AAW90239.1"/>
    <property type="molecule type" value="Genomic_DNA"/>
</dbReference>
<dbReference type="RefSeq" id="WP_010951304.1">
    <property type="nucleotide sequence ID" value="NC_002946.2"/>
</dbReference>
<dbReference type="RefSeq" id="YP_208651.1">
    <property type="nucleotide sequence ID" value="NC_002946.2"/>
</dbReference>
<dbReference type="SMR" id="Q5F6E8"/>
<dbReference type="STRING" id="242231.NGO_1611"/>
<dbReference type="KEGG" id="ngo:NGO_1611"/>
<dbReference type="PATRIC" id="fig|242231.10.peg.1926"/>
<dbReference type="HOGENOM" id="CLU_015768_0_1_4"/>
<dbReference type="Proteomes" id="UP000000535">
    <property type="component" value="Chromosome"/>
</dbReference>
<dbReference type="GO" id="GO:0005829">
    <property type="term" value="C:cytosol"/>
    <property type="evidence" value="ECO:0007669"/>
    <property type="project" value="TreeGrafter"/>
</dbReference>
<dbReference type="GO" id="GO:0005524">
    <property type="term" value="F:ATP binding"/>
    <property type="evidence" value="ECO:0007669"/>
    <property type="project" value="UniProtKB-KW"/>
</dbReference>
<dbReference type="GO" id="GO:0004818">
    <property type="term" value="F:glutamate-tRNA ligase activity"/>
    <property type="evidence" value="ECO:0007669"/>
    <property type="project" value="TreeGrafter"/>
</dbReference>
<dbReference type="GO" id="GO:0008270">
    <property type="term" value="F:zinc ion binding"/>
    <property type="evidence" value="ECO:0007669"/>
    <property type="project" value="UniProtKB-UniRule"/>
</dbReference>
<dbReference type="GO" id="GO:0006424">
    <property type="term" value="P:glutamyl-tRNA aminoacylation"/>
    <property type="evidence" value="ECO:0007669"/>
    <property type="project" value="InterPro"/>
</dbReference>
<dbReference type="GO" id="GO:0006400">
    <property type="term" value="P:tRNA modification"/>
    <property type="evidence" value="ECO:0007669"/>
    <property type="project" value="InterPro"/>
</dbReference>
<dbReference type="FunFam" id="3.40.50.620:FF:000093">
    <property type="entry name" value="Glutamyl-Q tRNA(Asp) synthetase"/>
    <property type="match status" value="1"/>
</dbReference>
<dbReference type="Gene3D" id="3.40.50.620">
    <property type="entry name" value="HUPs"/>
    <property type="match status" value="1"/>
</dbReference>
<dbReference type="HAMAP" id="MF_01428">
    <property type="entry name" value="Glu_Q_tRNA_synth"/>
    <property type="match status" value="1"/>
</dbReference>
<dbReference type="InterPro" id="IPR022380">
    <property type="entry name" value="Glu-Q_tRNA(Asp)_Synthase"/>
</dbReference>
<dbReference type="InterPro" id="IPR000924">
    <property type="entry name" value="Glu/Gln-tRNA-synth"/>
</dbReference>
<dbReference type="InterPro" id="IPR020058">
    <property type="entry name" value="Glu/Gln-tRNA-synth_Ib_cat-dom"/>
</dbReference>
<dbReference type="InterPro" id="IPR049940">
    <property type="entry name" value="GluQ/Sye"/>
</dbReference>
<dbReference type="InterPro" id="IPR014729">
    <property type="entry name" value="Rossmann-like_a/b/a_fold"/>
</dbReference>
<dbReference type="NCBIfam" id="NF004314">
    <property type="entry name" value="PRK05710.1-3"/>
    <property type="match status" value="1"/>
</dbReference>
<dbReference type="NCBIfam" id="TIGR03838">
    <property type="entry name" value="queuosine_YadB"/>
    <property type="match status" value="1"/>
</dbReference>
<dbReference type="PANTHER" id="PTHR43311">
    <property type="entry name" value="GLUTAMATE--TRNA LIGASE"/>
    <property type="match status" value="1"/>
</dbReference>
<dbReference type="PANTHER" id="PTHR43311:SF1">
    <property type="entry name" value="GLUTAMYL-Q TRNA(ASP) SYNTHETASE"/>
    <property type="match status" value="1"/>
</dbReference>
<dbReference type="Pfam" id="PF00749">
    <property type="entry name" value="tRNA-synt_1c"/>
    <property type="match status" value="1"/>
</dbReference>
<dbReference type="PRINTS" id="PR00987">
    <property type="entry name" value="TRNASYNTHGLU"/>
</dbReference>
<dbReference type="SUPFAM" id="SSF52374">
    <property type="entry name" value="Nucleotidylyl transferase"/>
    <property type="match status" value="1"/>
</dbReference>
<gene>
    <name evidence="1" type="primary">gluQ</name>
    <name type="ordered locus">NGO_1611</name>
</gene>
<name>GLUQ_NEIG1</name>